<evidence type="ECO:0000255" key="1">
    <source>
        <dbReference type="HAMAP-Rule" id="MF_00509"/>
    </source>
</evidence>
<evidence type="ECO:0000256" key="2">
    <source>
        <dbReference type="SAM" id="MobiDB-lite"/>
    </source>
</evidence>
<reference key="1">
    <citation type="journal article" date="2002" name="Environ. Microbiol.">
        <title>Complete genome sequence and comparative analysis of the metabolically versatile Pseudomonas putida KT2440.</title>
        <authorList>
            <person name="Nelson K.E."/>
            <person name="Weinel C."/>
            <person name="Paulsen I.T."/>
            <person name="Dodson R.J."/>
            <person name="Hilbert H."/>
            <person name="Martins dos Santos V.A.P."/>
            <person name="Fouts D.E."/>
            <person name="Gill S.R."/>
            <person name="Pop M."/>
            <person name="Holmes M."/>
            <person name="Brinkac L.M."/>
            <person name="Beanan M.J."/>
            <person name="DeBoy R.T."/>
            <person name="Daugherty S.C."/>
            <person name="Kolonay J.F."/>
            <person name="Madupu R."/>
            <person name="Nelson W.C."/>
            <person name="White O."/>
            <person name="Peterson J.D."/>
            <person name="Khouri H.M."/>
            <person name="Hance I."/>
            <person name="Chris Lee P."/>
            <person name="Holtzapple E.K."/>
            <person name="Scanlan D."/>
            <person name="Tran K."/>
            <person name="Moazzez A."/>
            <person name="Utterback T.R."/>
            <person name="Rizzo M."/>
            <person name="Lee K."/>
            <person name="Kosack D."/>
            <person name="Moestl D."/>
            <person name="Wedler H."/>
            <person name="Lauber J."/>
            <person name="Stjepandic D."/>
            <person name="Hoheisel J."/>
            <person name="Straetz M."/>
            <person name="Heim S."/>
            <person name="Kiewitz C."/>
            <person name="Eisen J.A."/>
            <person name="Timmis K.N."/>
            <person name="Duesterhoeft A."/>
            <person name="Tuemmler B."/>
            <person name="Fraser C.M."/>
        </authorList>
    </citation>
    <scope>NUCLEOTIDE SEQUENCE [LARGE SCALE GENOMIC DNA]</scope>
    <source>
        <strain>ATCC 47054 / DSM 6125 / CFBP 8728 / NCIMB 11950 / KT2440</strain>
    </source>
</reference>
<accession>Q88F24</accession>
<comment type="function">
    <text evidence="1">Essential cell division protein that stabilizes the FtsZ protofilaments by cross-linking them and that serves as a cytoplasmic membrane anchor for the Z ring. Also required for the recruitment to the septal ring of downstream cell division proteins.</text>
</comment>
<comment type="subunit">
    <text evidence="1">Interacts with FtsZ via their C-terminal domains.</text>
</comment>
<comment type="subcellular location">
    <subcellularLocation>
        <location evidence="1">Cell inner membrane</location>
        <topology evidence="1">Single-pass type I membrane protein</topology>
    </subcellularLocation>
    <text evidence="1">Localizes to the Z ring in an FtsZ-dependent manner.</text>
</comment>
<comment type="similarity">
    <text evidence="1">Belongs to the ZipA family.</text>
</comment>
<sequence length="297" mass="32842">MEIGLREWLILIGIIVIAGILFDGWRRMRGGKGKLKFRLDRSYSNLPDEEGGSAEVLGPSRVLDTHKEPELDESDLPSLSASARDREREPKPVKASKRGKRASAAADVHQGDLNLSAEPREPDLFSDSDDDFAADNNRSSGAAPASNSVKELPPAEEVLVISVISRDEGGFKGPALLQNILESGLRFGEMDIFHRHESMAGHGEVLFSMANAVKPGVFDLDDIDHFSTRAVSFFLGLPGPRHPKQAFDVMVAAARKLAHELNGELKDDQRSVLTAQTIEHYRQRIVEFERRALTQKR</sequence>
<protein>
    <recommendedName>
        <fullName evidence="1">Cell division protein ZipA</fullName>
    </recommendedName>
</protein>
<keyword id="KW-0131">Cell cycle</keyword>
<keyword id="KW-0132">Cell division</keyword>
<keyword id="KW-0997">Cell inner membrane</keyword>
<keyword id="KW-1003">Cell membrane</keyword>
<keyword id="KW-0472">Membrane</keyword>
<keyword id="KW-1185">Reference proteome</keyword>
<keyword id="KW-0812">Transmembrane</keyword>
<keyword id="KW-1133">Transmembrane helix</keyword>
<organism>
    <name type="scientific">Pseudomonas putida (strain ATCC 47054 / DSM 6125 / CFBP 8728 / NCIMB 11950 / KT2440)</name>
    <dbReference type="NCBI Taxonomy" id="160488"/>
    <lineage>
        <taxon>Bacteria</taxon>
        <taxon>Pseudomonadati</taxon>
        <taxon>Pseudomonadota</taxon>
        <taxon>Gammaproteobacteria</taxon>
        <taxon>Pseudomonadales</taxon>
        <taxon>Pseudomonadaceae</taxon>
        <taxon>Pseudomonas</taxon>
    </lineage>
</organism>
<feature type="chain" id="PRO_0000214532" description="Cell division protein ZipA">
    <location>
        <begin position="1"/>
        <end position="297"/>
    </location>
</feature>
<feature type="topological domain" description="Periplasmic" evidence="1">
    <location>
        <position position="1"/>
    </location>
</feature>
<feature type="transmembrane region" description="Helical" evidence="1">
    <location>
        <begin position="2"/>
        <end position="22"/>
    </location>
</feature>
<feature type="topological domain" description="Cytoplasmic" evidence="1">
    <location>
        <begin position="23"/>
        <end position="297"/>
    </location>
</feature>
<feature type="region of interest" description="Disordered" evidence="2">
    <location>
        <begin position="48"/>
        <end position="151"/>
    </location>
</feature>
<feature type="compositionally biased region" description="Basic and acidic residues" evidence="2">
    <location>
        <begin position="83"/>
        <end position="92"/>
    </location>
</feature>
<feature type="compositionally biased region" description="Acidic residues" evidence="2">
    <location>
        <begin position="124"/>
        <end position="133"/>
    </location>
</feature>
<dbReference type="EMBL" id="AE015451">
    <property type="protein sequence ID" value="AAN69855.1"/>
    <property type="molecule type" value="Genomic_DNA"/>
</dbReference>
<dbReference type="RefSeq" id="NP_746391.1">
    <property type="nucleotide sequence ID" value="NC_002947.4"/>
</dbReference>
<dbReference type="RefSeq" id="WP_049588192.1">
    <property type="nucleotide sequence ID" value="NZ_CP169744.1"/>
</dbReference>
<dbReference type="SMR" id="Q88F24"/>
<dbReference type="STRING" id="160488.PP_4275"/>
<dbReference type="PaxDb" id="160488-PP_4275"/>
<dbReference type="GeneID" id="83679016"/>
<dbReference type="KEGG" id="ppu:PP_4275"/>
<dbReference type="PATRIC" id="fig|160488.4.peg.4545"/>
<dbReference type="eggNOG" id="COG3115">
    <property type="taxonomic scope" value="Bacteria"/>
</dbReference>
<dbReference type="HOGENOM" id="CLU_030174_0_1_6"/>
<dbReference type="OrthoDB" id="7054914at2"/>
<dbReference type="PhylomeDB" id="Q88F24"/>
<dbReference type="Proteomes" id="UP000000556">
    <property type="component" value="Chromosome"/>
</dbReference>
<dbReference type="GO" id="GO:0032153">
    <property type="term" value="C:cell division site"/>
    <property type="evidence" value="ECO:0007669"/>
    <property type="project" value="UniProtKB-UniRule"/>
</dbReference>
<dbReference type="GO" id="GO:0005886">
    <property type="term" value="C:plasma membrane"/>
    <property type="evidence" value="ECO:0007669"/>
    <property type="project" value="UniProtKB-SubCell"/>
</dbReference>
<dbReference type="GO" id="GO:0000917">
    <property type="term" value="P:division septum assembly"/>
    <property type="evidence" value="ECO:0007669"/>
    <property type="project" value="TreeGrafter"/>
</dbReference>
<dbReference type="GO" id="GO:0043093">
    <property type="term" value="P:FtsZ-dependent cytokinesis"/>
    <property type="evidence" value="ECO:0007669"/>
    <property type="project" value="UniProtKB-UniRule"/>
</dbReference>
<dbReference type="Gene3D" id="3.30.1400.10">
    <property type="entry name" value="ZipA, C-terminal FtsZ-binding domain"/>
    <property type="match status" value="1"/>
</dbReference>
<dbReference type="HAMAP" id="MF_00509">
    <property type="entry name" value="ZipA"/>
    <property type="match status" value="1"/>
</dbReference>
<dbReference type="InterPro" id="IPR011919">
    <property type="entry name" value="Cell_div_ZipA"/>
</dbReference>
<dbReference type="InterPro" id="IPR007449">
    <property type="entry name" value="ZipA_FtsZ-bd_C"/>
</dbReference>
<dbReference type="InterPro" id="IPR036765">
    <property type="entry name" value="ZipA_FtsZ-bd_C_sf"/>
</dbReference>
<dbReference type="NCBIfam" id="TIGR02205">
    <property type="entry name" value="septum_zipA"/>
    <property type="match status" value="1"/>
</dbReference>
<dbReference type="PANTHER" id="PTHR38685">
    <property type="entry name" value="CELL DIVISION PROTEIN ZIPA"/>
    <property type="match status" value="1"/>
</dbReference>
<dbReference type="PANTHER" id="PTHR38685:SF1">
    <property type="entry name" value="CELL DIVISION PROTEIN ZIPA"/>
    <property type="match status" value="1"/>
</dbReference>
<dbReference type="Pfam" id="PF04354">
    <property type="entry name" value="ZipA_C"/>
    <property type="match status" value="1"/>
</dbReference>
<dbReference type="SMART" id="SM00771">
    <property type="entry name" value="ZipA_C"/>
    <property type="match status" value="1"/>
</dbReference>
<dbReference type="SUPFAM" id="SSF64383">
    <property type="entry name" value="Cell-division protein ZipA, C-terminal domain"/>
    <property type="match status" value="1"/>
</dbReference>
<name>ZIPA_PSEPK</name>
<proteinExistence type="inferred from homology"/>
<gene>
    <name evidence="1" type="primary">zipA</name>
    <name type="ordered locus">PP_4275</name>
</gene>